<feature type="chain" id="PRO_0000263664" description="Putative uncharacterized protein encoded by LINC00301">
    <location>
        <begin position="1"/>
        <end position="95"/>
    </location>
</feature>
<feature type="transmembrane region" description="Helical" evidence="1">
    <location>
        <begin position="27"/>
        <end position="47"/>
    </location>
</feature>
<protein>
    <recommendedName>
        <fullName>Putative uncharacterized protein encoded by LINC00301</fullName>
    </recommendedName>
</protein>
<name>NC301_HUMAN</name>
<proteinExistence type="uncertain"/>
<gene>
    <name type="primary">LINC00301</name>
    <name type="synonym">C11orf64</name>
    <name type="synonym">NCRNA00301</name>
</gene>
<dbReference type="EMBL" id="BC029583">
    <property type="status" value="NOT_ANNOTATED_CDS"/>
    <property type="molecule type" value="mRNA"/>
</dbReference>
<dbReference type="SMR" id="Q8NCQ3"/>
<dbReference type="BioMuta" id="HGNC:28603"/>
<dbReference type="DMDM" id="74730160"/>
<dbReference type="ProteomicsDB" id="72920"/>
<dbReference type="AGR" id="HGNC:28603"/>
<dbReference type="GeneCards" id="LINC00301"/>
<dbReference type="HGNC" id="HGNC:28603">
    <property type="gene designation" value="LINC00301"/>
</dbReference>
<dbReference type="neXtProt" id="NX_Q8NCQ3"/>
<dbReference type="InParanoid" id="Q8NCQ3"/>
<dbReference type="PAN-GO" id="Q8NCQ3">
    <property type="GO annotations" value="0 GO annotations based on evolutionary models"/>
</dbReference>
<dbReference type="Pharos" id="Q8NCQ3">
    <property type="development level" value="Tdark"/>
</dbReference>
<dbReference type="Proteomes" id="UP000005640">
    <property type="component" value="Unplaced"/>
</dbReference>
<dbReference type="RNAct" id="Q8NCQ3">
    <property type="molecule type" value="protein"/>
</dbReference>
<dbReference type="GO" id="GO:0016020">
    <property type="term" value="C:membrane"/>
    <property type="evidence" value="ECO:0007669"/>
    <property type="project" value="UniProtKB-SubCell"/>
</dbReference>
<organism>
    <name type="scientific">Homo sapiens</name>
    <name type="common">Human</name>
    <dbReference type="NCBI Taxonomy" id="9606"/>
    <lineage>
        <taxon>Eukaryota</taxon>
        <taxon>Metazoa</taxon>
        <taxon>Chordata</taxon>
        <taxon>Craniata</taxon>
        <taxon>Vertebrata</taxon>
        <taxon>Euteleostomi</taxon>
        <taxon>Mammalia</taxon>
        <taxon>Eutheria</taxon>
        <taxon>Euarchontoglires</taxon>
        <taxon>Primates</taxon>
        <taxon>Haplorrhini</taxon>
        <taxon>Catarrhini</taxon>
        <taxon>Hominidae</taxon>
        <taxon>Homo</taxon>
    </lineage>
</organism>
<evidence type="ECO:0000255" key="1"/>
<evidence type="ECO:0000305" key="2"/>
<comment type="subcellular location">
    <subcellularLocation>
        <location evidence="2">Membrane</location>
        <topology evidence="2">Single-pass membrane protein</topology>
    </subcellularLocation>
</comment>
<comment type="caution">
    <text evidence="2">Product of a dubious CDS prediction.</text>
</comment>
<keyword id="KW-0472">Membrane</keyword>
<keyword id="KW-1185">Reference proteome</keyword>
<keyword id="KW-0812">Transmembrane</keyword>
<keyword id="KW-1133">Transmembrane helix</keyword>
<reference key="1">
    <citation type="journal article" date="2004" name="Genome Res.">
        <title>The status, quality, and expansion of the NIH full-length cDNA project: the Mammalian Gene Collection (MGC).</title>
        <authorList>
            <consortium name="The MGC Project Team"/>
        </authorList>
    </citation>
    <scope>NUCLEOTIDE SEQUENCE [LARGE SCALE MRNA]</scope>
    <source>
        <tissue>Testis</tissue>
    </source>
</reference>
<sequence>MPSSHIVLKEETRMLGLMYAIWMNLNSFGLAIIGILLIACEIILFLTKDETIQWPHVPSNRGSKANLILKELQLLVRSTWWFHRETAQRTCLYLA</sequence>
<accession>Q8NCQ3</accession>